<reference key="1">
    <citation type="submission" date="1990-09" db="EMBL/GenBank/DDBJ databases">
        <authorList>
            <person name="Hankeln T."/>
            <person name="Rozynek P."/>
            <person name="Schmidt E.R."/>
            <person name="Broecker M."/>
        </authorList>
    </citation>
    <scope>NUCLEOTIDE SEQUENCE [GENOMIC DNA]</scope>
</reference>
<proteinExistence type="inferred from homology"/>
<keyword id="KW-0349">Heme</keyword>
<keyword id="KW-0408">Iron</keyword>
<keyword id="KW-0479">Metal-binding</keyword>
<keyword id="KW-0561">Oxygen transport</keyword>
<keyword id="KW-0732">Signal</keyword>
<keyword id="KW-0813">Transport</keyword>
<comment type="miscellaneous">
    <text>There are at least 12 different components in Midge globin.</text>
</comment>
<comment type="similarity">
    <text evidence="1">Belongs to the globin family.</text>
</comment>
<sequence length="163" mass="17782">MKFFAVLTLCIIGAIAHPLTSDEANLVKSSWNQVKHNEVDILAAVFKAYPDIQAKFPQFAGKDLDSIKTSGQFATHATRIVSFLSELIALSGNEANLSAVYGLVKKLGVDHKNRGITQGQFNEFKTALISYLSSHVSWGDNVAAAWEHALENTYTVAFEVIPA</sequence>
<gene>
    <name type="primary">CTT-V</name>
</gene>
<accession>P29243</accession>
<organism>
    <name type="scientific">Chironomus thummi piger</name>
    <name type="common">Midge</name>
    <name type="synonym">Chironomus piger</name>
    <dbReference type="NCBI Taxonomy" id="7156"/>
    <lineage>
        <taxon>Eukaryota</taxon>
        <taxon>Metazoa</taxon>
        <taxon>Ecdysozoa</taxon>
        <taxon>Arthropoda</taxon>
        <taxon>Hexapoda</taxon>
        <taxon>Insecta</taxon>
        <taxon>Pterygota</taxon>
        <taxon>Neoptera</taxon>
        <taxon>Endopterygota</taxon>
        <taxon>Diptera</taxon>
        <taxon>Nematocera</taxon>
        <taxon>Chironomoidea</taxon>
        <taxon>Chironomidae</taxon>
        <taxon>Chironominae</taxon>
        <taxon>Chironomus</taxon>
    </lineage>
</organism>
<dbReference type="EMBL" id="X56271">
    <property type="protein sequence ID" value="CAA39718.1"/>
    <property type="molecule type" value="Genomic_DNA"/>
</dbReference>
<dbReference type="PIR" id="S21633">
    <property type="entry name" value="S21633"/>
</dbReference>
<dbReference type="SMR" id="P29243"/>
<dbReference type="GO" id="GO:0005576">
    <property type="term" value="C:extracellular region"/>
    <property type="evidence" value="ECO:0007669"/>
    <property type="project" value="InterPro"/>
</dbReference>
<dbReference type="GO" id="GO:0005833">
    <property type="term" value="C:hemoglobin complex"/>
    <property type="evidence" value="ECO:0007669"/>
    <property type="project" value="InterPro"/>
</dbReference>
<dbReference type="GO" id="GO:0020037">
    <property type="term" value="F:heme binding"/>
    <property type="evidence" value="ECO:0007669"/>
    <property type="project" value="InterPro"/>
</dbReference>
<dbReference type="GO" id="GO:0046872">
    <property type="term" value="F:metal ion binding"/>
    <property type="evidence" value="ECO:0007669"/>
    <property type="project" value="UniProtKB-KW"/>
</dbReference>
<dbReference type="GO" id="GO:0019825">
    <property type="term" value="F:oxygen binding"/>
    <property type="evidence" value="ECO:0007669"/>
    <property type="project" value="InterPro"/>
</dbReference>
<dbReference type="GO" id="GO:0005344">
    <property type="term" value="F:oxygen carrier activity"/>
    <property type="evidence" value="ECO:0007669"/>
    <property type="project" value="UniProtKB-KW"/>
</dbReference>
<dbReference type="CDD" id="cd01040">
    <property type="entry name" value="Mb-like"/>
    <property type="match status" value="1"/>
</dbReference>
<dbReference type="Gene3D" id="1.10.490.10">
    <property type="entry name" value="Globins"/>
    <property type="match status" value="1"/>
</dbReference>
<dbReference type="InterPro" id="IPR002336">
    <property type="entry name" value="Erythrocruorin"/>
</dbReference>
<dbReference type="InterPro" id="IPR000971">
    <property type="entry name" value="Globin"/>
</dbReference>
<dbReference type="InterPro" id="IPR009050">
    <property type="entry name" value="Globin-like_sf"/>
</dbReference>
<dbReference type="InterPro" id="IPR012292">
    <property type="entry name" value="Globin/Proto"/>
</dbReference>
<dbReference type="InterPro" id="IPR044399">
    <property type="entry name" value="Mb-like_M"/>
</dbReference>
<dbReference type="PANTHER" id="PTHR47217">
    <property type="entry name" value="GLOBIN-LIKE PROTEIN"/>
    <property type="match status" value="1"/>
</dbReference>
<dbReference type="PANTHER" id="PTHR47217:SF1">
    <property type="entry name" value="GLOBIN-LIKE PROTEIN"/>
    <property type="match status" value="1"/>
</dbReference>
<dbReference type="Pfam" id="PF00042">
    <property type="entry name" value="Globin"/>
    <property type="match status" value="1"/>
</dbReference>
<dbReference type="PRINTS" id="PR00611">
    <property type="entry name" value="ERYTHCRUORIN"/>
</dbReference>
<dbReference type="SUPFAM" id="SSF46458">
    <property type="entry name" value="Globin-like"/>
    <property type="match status" value="1"/>
</dbReference>
<dbReference type="PROSITE" id="PS01033">
    <property type="entry name" value="GLOBIN"/>
    <property type="match status" value="1"/>
</dbReference>
<name>GLBV_CHITP</name>
<protein>
    <recommendedName>
        <fullName>Globin CTT-V</fullName>
    </recommendedName>
    <alternativeName>
        <fullName>HBV</fullName>
    </alternativeName>
</protein>
<feature type="signal peptide">
    <location>
        <begin position="1"/>
        <end position="16"/>
    </location>
</feature>
<feature type="chain" id="PRO_0000011206" description="Globin CTT-V">
    <location>
        <begin position="17"/>
        <end position="163"/>
    </location>
</feature>
<feature type="domain" description="Globin" evidence="1">
    <location>
        <begin position="18"/>
        <end position="163"/>
    </location>
</feature>
<feature type="binding site" description="distal binding residue" evidence="1">
    <location>
        <position position="76"/>
    </location>
    <ligand>
        <name>heme b</name>
        <dbReference type="ChEBI" id="CHEBI:60344"/>
    </ligand>
    <ligandPart>
        <name>Fe</name>
        <dbReference type="ChEBI" id="CHEBI:18248"/>
    </ligandPart>
</feature>
<feature type="binding site" description="proximal binding residue" evidence="1">
    <location>
        <position position="111"/>
    </location>
    <ligand>
        <name>heme b</name>
        <dbReference type="ChEBI" id="CHEBI:60344"/>
    </ligand>
    <ligandPart>
        <name>Fe</name>
        <dbReference type="ChEBI" id="CHEBI:18248"/>
    </ligandPart>
</feature>
<evidence type="ECO:0000255" key="1">
    <source>
        <dbReference type="PROSITE-ProRule" id="PRU00238"/>
    </source>
</evidence>